<accession>Q8CIZ9</accession>
<accession>A2AEK5</accession>
<accession>Q0KKX3</accession>
<accession>Q0KKX5</accession>
<accession>Q811U2</accession>
<dbReference type="EC" id="1.6.3.-"/>
<dbReference type="EMBL" id="AF539799">
    <property type="protein sequence ID" value="AAN75144.1"/>
    <property type="molecule type" value="mRNA"/>
</dbReference>
<dbReference type="EMBL" id="AK136432">
    <property type="protein sequence ID" value="BAE22974.1"/>
    <property type="molecule type" value="mRNA"/>
</dbReference>
<dbReference type="EMBL" id="AL671915">
    <property type="status" value="NOT_ANNOTATED_CDS"/>
    <property type="molecule type" value="Genomic_DNA"/>
</dbReference>
<dbReference type="EMBL" id="AB206383">
    <property type="protein sequence ID" value="BAF03561.1"/>
    <property type="molecule type" value="mRNA"/>
</dbReference>
<dbReference type="EMBL" id="AB206384">
    <property type="protein sequence ID" value="BAF03562.1"/>
    <property type="molecule type" value="mRNA"/>
</dbReference>
<dbReference type="EMBL" id="AB206385">
    <property type="protein sequence ID" value="BAF03563.1"/>
    <property type="molecule type" value="mRNA"/>
</dbReference>
<dbReference type="EMBL" id="AY174116">
    <property type="protein sequence ID" value="AAO20852.1"/>
    <property type="molecule type" value="mRNA"/>
</dbReference>
<dbReference type="CCDS" id="CCDS30390.1">
    <molecule id="Q8CIZ9-2"/>
</dbReference>
<dbReference type="RefSeq" id="NP_757340.1">
    <molecule id="Q8CIZ9-2"/>
    <property type="nucleotide sequence ID" value="NM_172203.2"/>
</dbReference>
<dbReference type="RefSeq" id="XP_006528578.1">
    <molecule id="Q8CIZ9-1"/>
    <property type="nucleotide sequence ID" value="XM_006528515.4"/>
</dbReference>
<dbReference type="SMR" id="Q8CIZ9"/>
<dbReference type="FunCoup" id="Q8CIZ9">
    <property type="interactions" value="332"/>
</dbReference>
<dbReference type="STRING" id="10090.ENSMUSP00000033610"/>
<dbReference type="PeroxiBase" id="5963">
    <property type="entry name" value="MmNOx01"/>
</dbReference>
<dbReference type="GlyCosmos" id="Q8CIZ9">
    <property type="glycosylation" value="2 sites, No reported glycans"/>
</dbReference>
<dbReference type="GlyGen" id="Q8CIZ9">
    <property type="glycosylation" value="2 sites"/>
</dbReference>
<dbReference type="iPTMnet" id="Q8CIZ9"/>
<dbReference type="PhosphoSitePlus" id="Q8CIZ9"/>
<dbReference type="PaxDb" id="10090-ENSMUSP00000033610"/>
<dbReference type="ProteomicsDB" id="252992">
    <molecule id="Q8CIZ9-1"/>
</dbReference>
<dbReference type="ProteomicsDB" id="252993">
    <molecule id="Q8CIZ9-2"/>
</dbReference>
<dbReference type="ProteomicsDB" id="252994">
    <molecule id="Q8CIZ9-3"/>
</dbReference>
<dbReference type="Antibodypedia" id="28538">
    <property type="antibodies" value="348 antibodies from 33 providers"/>
</dbReference>
<dbReference type="DNASU" id="237038"/>
<dbReference type="Ensembl" id="ENSMUST00000033610.13">
    <molecule id="Q8CIZ9-2"/>
    <property type="protein sequence ID" value="ENSMUSP00000033610.7"/>
    <property type="gene ID" value="ENSMUSG00000031257.15"/>
</dbReference>
<dbReference type="Ensembl" id="ENSMUST00000113275.10">
    <molecule id="Q8CIZ9-3"/>
    <property type="protein sequence ID" value="ENSMUSP00000108900.4"/>
    <property type="gene ID" value="ENSMUSG00000031257.15"/>
</dbReference>
<dbReference type="GeneID" id="237038"/>
<dbReference type="KEGG" id="mmu:237038"/>
<dbReference type="UCSC" id="uc009ufl.2">
    <molecule id="Q8CIZ9-1"/>
    <property type="organism name" value="mouse"/>
</dbReference>
<dbReference type="AGR" id="MGI:2450016"/>
<dbReference type="CTD" id="27035"/>
<dbReference type="MGI" id="MGI:2450016">
    <property type="gene designation" value="Nox1"/>
</dbReference>
<dbReference type="VEuPathDB" id="HostDB:ENSMUSG00000031257"/>
<dbReference type="eggNOG" id="KOG0039">
    <property type="taxonomic scope" value="Eukaryota"/>
</dbReference>
<dbReference type="GeneTree" id="ENSGT00940000161632"/>
<dbReference type="HOGENOM" id="CLU_005646_3_1_1"/>
<dbReference type="InParanoid" id="Q8CIZ9"/>
<dbReference type="OMA" id="CMEVGQY"/>
<dbReference type="OrthoDB" id="9280at9989"/>
<dbReference type="PhylomeDB" id="Q8CIZ9"/>
<dbReference type="TreeFam" id="TF105354"/>
<dbReference type="BRENDA" id="1.6.3.1">
    <property type="organism ID" value="3474"/>
</dbReference>
<dbReference type="Reactome" id="R-MMU-5668599">
    <property type="pathway name" value="RHO GTPases Activate NADPH Oxidases"/>
</dbReference>
<dbReference type="Reactome" id="R-MMU-9013149">
    <property type="pathway name" value="RAC1 GTPase cycle"/>
</dbReference>
<dbReference type="Reactome" id="R-MMU-9013423">
    <property type="pathway name" value="RAC3 GTPase cycle"/>
</dbReference>
<dbReference type="BioGRID-ORCS" id="237038">
    <property type="hits" value="1 hit in 81 CRISPR screens"/>
</dbReference>
<dbReference type="PRO" id="PR:Q8CIZ9"/>
<dbReference type="Proteomes" id="UP000000589">
    <property type="component" value="Chromosome X"/>
</dbReference>
<dbReference type="RNAct" id="Q8CIZ9">
    <property type="molecule type" value="protein"/>
</dbReference>
<dbReference type="Bgee" id="ENSMUSG00000031257">
    <property type="expression patterns" value="Expressed in ileum and 41 other cell types or tissues"/>
</dbReference>
<dbReference type="ExpressionAtlas" id="Q8CIZ9">
    <property type="expression patterns" value="baseline and differential"/>
</dbReference>
<dbReference type="GO" id="GO:0070161">
    <property type="term" value="C:anchoring junction"/>
    <property type="evidence" value="ECO:0007669"/>
    <property type="project" value="UniProtKB-KW"/>
</dbReference>
<dbReference type="GO" id="GO:0042995">
    <property type="term" value="C:cell projection"/>
    <property type="evidence" value="ECO:0007669"/>
    <property type="project" value="UniProtKB-SubCell"/>
</dbReference>
<dbReference type="GO" id="GO:0005737">
    <property type="term" value="C:cytoplasm"/>
    <property type="evidence" value="ECO:0000314"/>
    <property type="project" value="MGI"/>
</dbReference>
<dbReference type="GO" id="GO:0005769">
    <property type="term" value="C:early endosome"/>
    <property type="evidence" value="ECO:0007669"/>
    <property type="project" value="Ensembl"/>
</dbReference>
<dbReference type="GO" id="GO:0005768">
    <property type="term" value="C:endosome"/>
    <property type="evidence" value="ECO:0000315"/>
    <property type="project" value="MGI"/>
</dbReference>
<dbReference type="GO" id="GO:0043020">
    <property type="term" value="C:NADPH oxidase complex"/>
    <property type="evidence" value="ECO:0007669"/>
    <property type="project" value="Ensembl"/>
</dbReference>
<dbReference type="GO" id="GO:0046872">
    <property type="term" value="F:metal ion binding"/>
    <property type="evidence" value="ECO:0007669"/>
    <property type="project" value="UniProtKB-KW"/>
</dbReference>
<dbReference type="GO" id="GO:0031267">
    <property type="term" value="F:small GTPase binding"/>
    <property type="evidence" value="ECO:0007669"/>
    <property type="project" value="Ensembl"/>
</dbReference>
<dbReference type="GO" id="GO:0016175">
    <property type="term" value="F:superoxide-generating NAD(P)H oxidase activity"/>
    <property type="evidence" value="ECO:0000314"/>
    <property type="project" value="UniProtKB"/>
</dbReference>
<dbReference type="GO" id="GO:0106292">
    <property type="term" value="F:superoxide-generating NADPH oxidase activity"/>
    <property type="evidence" value="ECO:0007669"/>
    <property type="project" value="RHEA"/>
</dbReference>
<dbReference type="GO" id="GO:0001525">
    <property type="term" value="P:angiogenesis"/>
    <property type="evidence" value="ECO:0007669"/>
    <property type="project" value="Ensembl"/>
</dbReference>
<dbReference type="GO" id="GO:0016477">
    <property type="term" value="P:cell migration"/>
    <property type="evidence" value="ECO:0007669"/>
    <property type="project" value="Ensembl"/>
</dbReference>
<dbReference type="GO" id="GO:0071455">
    <property type="term" value="P:cellular response to hyperoxia"/>
    <property type="evidence" value="ECO:0000315"/>
    <property type="project" value="MGI"/>
</dbReference>
<dbReference type="GO" id="GO:0030198">
    <property type="term" value="P:extracellular matrix organization"/>
    <property type="evidence" value="ECO:0000315"/>
    <property type="project" value="MGI"/>
</dbReference>
<dbReference type="GO" id="GO:0042743">
    <property type="term" value="P:hydrogen peroxide metabolic process"/>
    <property type="evidence" value="ECO:0007669"/>
    <property type="project" value="Ensembl"/>
</dbReference>
<dbReference type="GO" id="GO:0008631">
    <property type="term" value="P:intrinsic apoptotic signaling pathway in response to oxidative stress"/>
    <property type="evidence" value="ECO:0000315"/>
    <property type="project" value="MGI"/>
</dbReference>
<dbReference type="GO" id="GO:0007254">
    <property type="term" value="P:JNK cascade"/>
    <property type="evidence" value="ECO:0000315"/>
    <property type="project" value="MGI"/>
</dbReference>
<dbReference type="GO" id="GO:0000165">
    <property type="term" value="P:MAPK cascade"/>
    <property type="evidence" value="ECO:0000315"/>
    <property type="project" value="MGI"/>
</dbReference>
<dbReference type="GO" id="GO:0072592">
    <property type="term" value="P:oxygen metabolic process"/>
    <property type="evidence" value="ECO:0000315"/>
    <property type="project" value="MGI"/>
</dbReference>
<dbReference type="GO" id="GO:0008284">
    <property type="term" value="P:positive regulation of cell population proliferation"/>
    <property type="evidence" value="ECO:0007669"/>
    <property type="project" value="Ensembl"/>
</dbReference>
<dbReference type="GO" id="GO:0045726">
    <property type="term" value="P:positive regulation of integrin biosynthetic process"/>
    <property type="evidence" value="ECO:0007669"/>
    <property type="project" value="Ensembl"/>
</dbReference>
<dbReference type="GO" id="GO:0046330">
    <property type="term" value="P:positive regulation of JNK cascade"/>
    <property type="evidence" value="ECO:0000315"/>
    <property type="project" value="MGI"/>
</dbReference>
<dbReference type="GO" id="GO:0043410">
    <property type="term" value="P:positive regulation of MAPK cascade"/>
    <property type="evidence" value="ECO:0000315"/>
    <property type="project" value="MGI"/>
</dbReference>
<dbReference type="GO" id="GO:1902177">
    <property type="term" value="P:positive regulation of oxidative stress-induced intrinsic apoptotic signaling pathway"/>
    <property type="evidence" value="ECO:0000315"/>
    <property type="project" value="MGI"/>
</dbReference>
<dbReference type="GO" id="GO:0010575">
    <property type="term" value="P:positive regulation of vascular endothelial growth factor production"/>
    <property type="evidence" value="ECO:0007669"/>
    <property type="project" value="Ensembl"/>
</dbReference>
<dbReference type="GO" id="GO:0003081">
    <property type="term" value="P:regulation of systemic arterial blood pressure by renin-angiotensin"/>
    <property type="evidence" value="ECO:0000315"/>
    <property type="project" value="MGI"/>
</dbReference>
<dbReference type="GO" id="GO:0042554">
    <property type="term" value="P:superoxide anion generation"/>
    <property type="evidence" value="ECO:0000314"/>
    <property type="project" value="MGI"/>
</dbReference>
<dbReference type="CDD" id="cd06186">
    <property type="entry name" value="NOX_Duox_like_FAD_NADP"/>
    <property type="match status" value="1"/>
</dbReference>
<dbReference type="FunFam" id="2.40.30.10:FF:000030">
    <property type="entry name" value="cytochrome b-245 heavy chain"/>
    <property type="match status" value="1"/>
</dbReference>
<dbReference type="FunFam" id="3.40.50.80:FF:000004">
    <property type="entry name" value="NADPH oxidase isoform 2"/>
    <property type="match status" value="1"/>
</dbReference>
<dbReference type="Gene3D" id="3.40.50.80">
    <property type="entry name" value="Nucleotide-binding domain of ferredoxin-NADP reductase (FNR) module"/>
    <property type="match status" value="1"/>
</dbReference>
<dbReference type="Gene3D" id="2.40.30.10">
    <property type="entry name" value="Translation factors"/>
    <property type="match status" value="1"/>
</dbReference>
<dbReference type="InterPro" id="IPR000778">
    <property type="entry name" value="Cyt_b245_heavy_chain"/>
</dbReference>
<dbReference type="InterPro" id="IPR013112">
    <property type="entry name" value="FAD-bd_8"/>
</dbReference>
<dbReference type="InterPro" id="IPR017927">
    <property type="entry name" value="FAD-bd_FR_type"/>
</dbReference>
<dbReference type="InterPro" id="IPR013130">
    <property type="entry name" value="Fe3_Rdtase_TM_dom"/>
</dbReference>
<dbReference type="InterPro" id="IPR013121">
    <property type="entry name" value="Fe_red_NAD-bd_6"/>
</dbReference>
<dbReference type="InterPro" id="IPR039261">
    <property type="entry name" value="FNR_nucleotide-bd"/>
</dbReference>
<dbReference type="InterPro" id="IPR050369">
    <property type="entry name" value="RBOH/FRE"/>
</dbReference>
<dbReference type="InterPro" id="IPR017938">
    <property type="entry name" value="Riboflavin_synthase-like_b-brl"/>
</dbReference>
<dbReference type="PANTHER" id="PTHR11972">
    <property type="entry name" value="NADPH OXIDASE"/>
    <property type="match status" value="1"/>
</dbReference>
<dbReference type="PANTHER" id="PTHR11972:SF71">
    <property type="entry name" value="NADPH OXIDASE 1"/>
    <property type="match status" value="1"/>
</dbReference>
<dbReference type="Pfam" id="PF08022">
    <property type="entry name" value="FAD_binding_8"/>
    <property type="match status" value="1"/>
</dbReference>
<dbReference type="Pfam" id="PF01794">
    <property type="entry name" value="Ferric_reduct"/>
    <property type="match status" value="1"/>
</dbReference>
<dbReference type="Pfam" id="PF08030">
    <property type="entry name" value="NAD_binding_6"/>
    <property type="match status" value="1"/>
</dbReference>
<dbReference type="PRINTS" id="PR00466">
    <property type="entry name" value="GP91PHOX"/>
</dbReference>
<dbReference type="SFLD" id="SFLDS00052">
    <property type="entry name" value="Ferric_Reductase_Domain"/>
    <property type="match status" value="1"/>
</dbReference>
<dbReference type="SFLD" id="SFLDG01168">
    <property type="entry name" value="Ferric_reductase_subgroup_(FRE"/>
    <property type="match status" value="1"/>
</dbReference>
<dbReference type="SUPFAM" id="SSF52343">
    <property type="entry name" value="Ferredoxin reductase-like, C-terminal NADP-linked domain"/>
    <property type="match status" value="1"/>
</dbReference>
<dbReference type="SUPFAM" id="SSF63380">
    <property type="entry name" value="Riboflavin synthase domain-like"/>
    <property type="match status" value="1"/>
</dbReference>
<dbReference type="PROSITE" id="PS51384">
    <property type="entry name" value="FAD_FR"/>
    <property type="match status" value="1"/>
</dbReference>
<feature type="chain" id="PRO_0000322982" description="NADPH oxidase 1">
    <location>
        <begin position="1"/>
        <end position="591"/>
    </location>
</feature>
<feature type="topological domain" description="Cytoplasmic" evidence="3">
    <location>
        <begin position="1"/>
        <end position="36"/>
    </location>
</feature>
<feature type="transmembrane region" description="Helical; Name=1" evidence="3">
    <location>
        <begin position="37"/>
        <end position="59"/>
    </location>
</feature>
<feature type="topological domain" description="Extracellular" evidence="3">
    <location>
        <begin position="60"/>
        <end position="72"/>
    </location>
</feature>
<feature type="transmembrane region" description="Helical; Name=2" evidence="3">
    <location>
        <begin position="73"/>
        <end position="97"/>
    </location>
</feature>
<feature type="topological domain" description="Cytoplasmic" evidence="3">
    <location>
        <begin position="98"/>
        <end position="130"/>
    </location>
</feature>
<feature type="transmembrane region" description="Helical; Name=3" evidence="3">
    <location>
        <begin position="131"/>
        <end position="151"/>
    </location>
</feature>
<feature type="topological domain" description="Extracellular" evidence="3">
    <location>
        <begin position="152"/>
        <end position="195"/>
    </location>
</feature>
<feature type="transmembrane region" description="Helical; Name=4" evidence="3">
    <location>
        <begin position="196"/>
        <end position="216"/>
    </location>
</feature>
<feature type="topological domain" description="Cytoplasmic" evidence="3">
    <location>
        <begin position="217"/>
        <end position="234"/>
    </location>
</feature>
<feature type="transmembrane region" description="Helical; Name=5" evidence="3">
    <location>
        <begin position="235"/>
        <end position="255"/>
    </location>
</feature>
<feature type="topological domain" description="Extracellular" evidence="3">
    <location>
        <begin position="256"/>
        <end position="423"/>
    </location>
</feature>
<feature type="transmembrane region" description="Helical; Name=6" evidence="3">
    <location>
        <begin position="424"/>
        <end position="444"/>
    </location>
</feature>
<feature type="topological domain" description="Cytoplasmic" evidence="3">
    <location>
        <begin position="445"/>
        <end position="591"/>
    </location>
</feature>
<feature type="domain" description="Ferric oxidoreductase">
    <location>
        <begin position="82"/>
        <end position="316"/>
    </location>
</feature>
<feature type="domain" description="FAD-binding FR-type" evidence="4">
    <location>
        <begin position="317"/>
        <end position="418"/>
    </location>
</feature>
<feature type="region of interest" description="Interaction with NOXO1" evidence="2">
    <location>
        <begin position="424"/>
        <end position="563"/>
    </location>
</feature>
<feature type="binding site" description="axial binding residue" evidence="11">
    <location>
        <position position="129"/>
    </location>
    <ligand>
        <name>heme</name>
        <dbReference type="ChEBI" id="CHEBI:30413"/>
    </ligand>
    <ligandPart>
        <name>Fe</name>
        <dbReference type="ChEBI" id="CHEBI:18248"/>
    </ligandPart>
</feature>
<feature type="binding site" description="axial binding residue" evidence="11">
    <location>
        <position position="143"/>
    </location>
    <ligand>
        <name>heme</name>
        <dbReference type="ChEBI" id="CHEBI:30413"/>
    </ligand>
    <ligandPart>
        <name>Fe</name>
        <dbReference type="ChEBI" id="CHEBI:18248"/>
    </ligandPart>
</feature>
<feature type="binding site" description="axial binding residue" evidence="11">
    <location>
        <position position="236"/>
    </location>
    <ligand>
        <name>heme</name>
        <dbReference type="ChEBI" id="CHEBI:30413"/>
    </ligand>
    <ligandPart>
        <name>Fe</name>
        <dbReference type="ChEBI" id="CHEBI:18248"/>
    </ligandPart>
</feature>
<feature type="binding site" description="axial binding residue" evidence="11">
    <location>
        <position position="248"/>
    </location>
    <ligand>
        <name>heme</name>
        <dbReference type="ChEBI" id="CHEBI:30413"/>
    </ligand>
    <ligandPart>
        <name>Fe</name>
        <dbReference type="ChEBI" id="CHEBI:18248"/>
    </ligandPart>
</feature>
<feature type="binding site" evidence="3">
    <location>
        <begin position="365"/>
        <end position="371"/>
    </location>
    <ligand>
        <name>FAD</name>
        <dbReference type="ChEBI" id="CHEBI:57692"/>
    </ligand>
</feature>
<feature type="modified residue" description="Phosphothreonine" evidence="1">
    <location>
        <position position="457"/>
    </location>
</feature>
<feature type="glycosylation site" description="N-linked (GlcNAc...) asparagine" evidence="3">
    <location>
        <position position="189"/>
    </location>
</feature>
<feature type="glycosylation site" description="N-linked (GlcNAc...) asparagine" evidence="3">
    <location>
        <position position="269"/>
    </location>
</feature>
<feature type="splice variant" id="VSP_038574" description="In isoform 2 and isoform 3." evidence="8 9 10">
    <location>
        <begin position="1"/>
        <end position="28"/>
    </location>
</feature>
<feature type="splice variant" id="VSP_038575" description="In isoform 3." evidence="11">
    <location>
        <begin position="460"/>
        <end position="508"/>
    </location>
</feature>
<protein>
    <recommendedName>
        <fullName>NADPH oxidase 1</fullName>
        <shortName>NOX-1</shortName>
        <ecNumber>1.6.3.-</ecNumber>
    </recommendedName>
</protein>
<keyword id="KW-0025">Alternative splicing</keyword>
<keyword id="KW-0965">Cell junction</keyword>
<keyword id="KW-1003">Cell membrane</keyword>
<keyword id="KW-0966">Cell projection</keyword>
<keyword id="KW-0249">Electron transport</keyword>
<keyword id="KW-0274">FAD</keyword>
<keyword id="KW-0285">Flavoprotein</keyword>
<keyword id="KW-0325">Glycoprotein</keyword>
<keyword id="KW-0349">Heme</keyword>
<keyword id="KW-0408">Iron</keyword>
<keyword id="KW-0472">Membrane</keyword>
<keyword id="KW-0479">Metal-binding</keyword>
<keyword id="KW-0521">NADP</keyword>
<keyword id="KW-0560">Oxidoreductase</keyword>
<keyword id="KW-0597">Phosphoprotein</keyword>
<keyword id="KW-1185">Reference proteome</keyword>
<keyword id="KW-0812">Transmembrane</keyword>
<keyword id="KW-1133">Transmembrane helix</keyword>
<keyword id="KW-0813">Transport</keyword>
<reference key="1">
    <citation type="journal article" date="2003" name="J. Biol. Chem.">
        <title>Two novel proteins activate superoxide generation by the NADPH oxidase NOX1.</title>
        <authorList>
            <person name="Banfi B."/>
            <person name="Clark R.A."/>
            <person name="Steger K."/>
            <person name="Krause K.-H."/>
        </authorList>
    </citation>
    <scope>NUCLEOTIDE SEQUENCE [MRNA] (ISOFORM 2)</scope>
    <scope>ACTIVITY REGULATION (ISOFORM 2)</scope>
    <scope>FUNCTION (ISOFORM 2)</scope>
    <scope>CATALYTIC ACTIVITY (ISOFORM 2)</scope>
    <scope>TISSUE SPECIFICITY (ISOFORM 2)</scope>
    <source>
        <strain>BALB/cJ</strain>
    </source>
</reference>
<reference key="2">
    <citation type="journal article" date="2005" name="Science">
        <title>The transcriptional landscape of the mammalian genome.</title>
        <authorList>
            <person name="Carninci P."/>
            <person name="Kasukawa T."/>
            <person name="Katayama S."/>
            <person name="Gough J."/>
            <person name="Frith M.C."/>
            <person name="Maeda N."/>
            <person name="Oyama R."/>
            <person name="Ravasi T."/>
            <person name="Lenhard B."/>
            <person name="Wells C."/>
            <person name="Kodzius R."/>
            <person name="Shimokawa K."/>
            <person name="Bajic V.B."/>
            <person name="Brenner S.E."/>
            <person name="Batalov S."/>
            <person name="Forrest A.R."/>
            <person name="Zavolan M."/>
            <person name="Davis M.J."/>
            <person name="Wilming L.G."/>
            <person name="Aidinis V."/>
            <person name="Allen J.E."/>
            <person name="Ambesi-Impiombato A."/>
            <person name="Apweiler R."/>
            <person name="Aturaliya R.N."/>
            <person name="Bailey T.L."/>
            <person name="Bansal M."/>
            <person name="Baxter L."/>
            <person name="Beisel K.W."/>
            <person name="Bersano T."/>
            <person name="Bono H."/>
            <person name="Chalk A.M."/>
            <person name="Chiu K.P."/>
            <person name="Choudhary V."/>
            <person name="Christoffels A."/>
            <person name="Clutterbuck D.R."/>
            <person name="Crowe M.L."/>
            <person name="Dalla E."/>
            <person name="Dalrymple B.P."/>
            <person name="de Bono B."/>
            <person name="Della Gatta G."/>
            <person name="di Bernardo D."/>
            <person name="Down T."/>
            <person name="Engstrom P."/>
            <person name="Fagiolini M."/>
            <person name="Faulkner G."/>
            <person name="Fletcher C.F."/>
            <person name="Fukushima T."/>
            <person name="Furuno M."/>
            <person name="Futaki S."/>
            <person name="Gariboldi M."/>
            <person name="Georgii-Hemming P."/>
            <person name="Gingeras T.R."/>
            <person name="Gojobori T."/>
            <person name="Green R.E."/>
            <person name="Gustincich S."/>
            <person name="Harbers M."/>
            <person name="Hayashi Y."/>
            <person name="Hensch T.K."/>
            <person name="Hirokawa N."/>
            <person name="Hill D."/>
            <person name="Huminiecki L."/>
            <person name="Iacono M."/>
            <person name="Ikeo K."/>
            <person name="Iwama A."/>
            <person name="Ishikawa T."/>
            <person name="Jakt M."/>
            <person name="Kanapin A."/>
            <person name="Katoh M."/>
            <person name="Kawasawa Y."/>
            <person name="Kelso J."/>
            <person name="Kitamura H."/>
            <person name="Kitano H."/>
            <person name="Kollias G."/>
            <person name="Krishnan S.P."/>
            <person name="Kruger A."/>
            <person name="Kummerfeld S.K."/>
            <person name="Kurochkin I.V."/>
            <person name="Lareau L.F."/>
            <person name="Lazarevic D."/>
            <person name="Lipovich L."/>
            <person name="Liu J."/>
            <person name="Liuni S."/>
            <person name="McWilliam S."/>
            <person name="Madan Babu M."/>
            <person name="Madera M."/>
            <person name="Marchionni L."/>
            <person name="Matsuda H."/>
            <person name="Matsuzawa S."/>
            <person name="Miki H."/>
            <person name="Mignone F."/>
            <person name="Miyake S."/>
            <person name="Morris K."/>
            <person name="Mottagui-Tabar S."/>
            <person name="Mulder N."/>
            <person name="Nakano N."/>
            <person name="Nakauchi H."/>
            <person name="Ng P."/>
            <person name="Nilsson R."/>
            <person name="Nishiguchi S."/>
            <person name="Nishikawa S."/>
            <person name="Nori F."/>
            <person name="Ohara O."/>
            <person name="Okazaki Y."/>
            <person name="Orlando V."/>
            <person name="Pang K.C."/>
            <person name="Pavan W.J."/>
            <person name="Pavesi G."/>
            <person name="Pesole G."/>
            <person name="Petrovsky N."/>
            <person name="Piazza S."/>
            <person name="Reed J."/>
            <person name="Reid J.F."/>
            <person name="Ring B.Z."/>
            <person name="Ringwald M."/>
            <person name="Rost B."/>
            <person name="Ruan Y."/>
            <person name="Salzberg S.L."/>
            <person name="Sandelin A."/>
            <person name="Schneider C."/>
            <person name="Schoenbach C."/>
            <person name="Sekiguchi K."/>
            <person name="Semple C.A."/>
            <person name="Seno S."/>
            <person name="Sessa L."/>
            <person name="Sheng Y."/>
            <person name="Shibata Y."/>
            <person name="Shimada H."/>
            <person name="Shimada K."/>
            <person name="Silva D."/>
            <person name="Sinclair B."/>
            <person name="Sperling S."/>
            <person name="Stupka E."/>
            <person name="Sugiura K."/>
            <person name="Sultana R."/>
            <person name="Takenaka Y."/>
            <person name="Taki K."/>
            <person name="Tammoja K."/>
            <person name="Tan S.L."/>
            <person name="Tang S."/>
            <person name="Taylor M.S."/>
            <person name="Tegner J."/>
            <person name="Teichmann S.A."/>
            <person name="Ueda H.R."/>
            <person name="van Nimwegen E."/>
            <person name="Verardo R."/>
            <person name="Wei C.L."/>
            <person name="Yagi K."/>
            <person name="Yamanishi H."/>
            <person name="Zabarovsky E."/>
            <person name="Zhu S."/>
            <person name="Zimmer A."/>
            <person name="Hide W."/>
            <person name="Bult C."/>
            <person name="Grimmond S.M."/>
            <person name="Teasdale R.D."/>
            <person name="Liu E.T."/>
            <person name="Brusic V."/>
            <person name="Quackenbush J."/>
            <person name="Wahlestedt C."/>
            <person name="Mattick J.S."/>
            <person name="Hume D.A."/>
            <person name="Kai C."/>
            <person name="Sasaki D."/>
            <person name="Tomaru Y."/>
            <person name="Fukuda S."/>
            <person name="Kanamori-Katayama M."/>
            <person name="Suzuki M."/>
            <person name="Aoki J."/>
            <person name="Arakawa T."/>
            <person name="Iida J."/>
            <person name="Imamura K."/>
            <person name="Itoh M."/>
            <person name="Kato T."/>
            <person name="Kawaji H."/>
            <person name="Kawagashira N."/>
            <person name="Kawashima T."/>
            <person name="Kojima M."/>
            <person name="Kondo S."/>
            <person name="Konno H."/>
            <person name="Nakano K."/>
            <person name="Ninomiya N."/>
            <person name="Nishio T."/>
            <person name="Okada M."/>
            <person name="Plessy C."/>
            <person name="Shibata K."/>
            <person name="Shiraki T."/>
            <person name="Suzuki S."/>
            <person name="Tagami M."/>
            <person name="Waki K."/>
            <person name="Watahiki A."/>
            <person name="Okamura-Oho Y."/>
            <person name="Suzuki H."/>
            <person name="Kawai J."/>
            <person name="Hayashizaki Y."/>
        </authorList>
    </citation>
    <scope>NUCLEOTIDE SEQUENCE [LARGE SCALE MRNA] (ISOFORM 2)</scope>
    <source>
        <strain>C57BL/6J</strain>
        <tissue>Colon</tissue>
    </source>
</reference>
<reference key="3">
    <citation type="journal article" date="2009" name="PLoS Biol.">
        <title>Lineage-specific biology revealed by a finished genome assembly of the mouse.</title>
        <authorList>
            <person name="Church D.M."/>
            <person name="Goodstadt L."/>
            <person name="Hillier L.W."/>
            <person name="Zody M.C."/>
            <person name="Goldstein S."/>
            <person name="She X."/>
            <person name="Bult C.J."/>
            <person name="Agarwala R."/>
            <person name="Cherry J.L."/>
            <person name="DiCuccio M."/>
            <person name="Hlavina W."/>
            <person name="Kapustin Y."/>
            <person name="Meric P."/>
            <person name="Maglott D."/>
            <person name="Birtle Z."/>
            <person name="Marques A.C."/>
            <person name="Graves T."/>
            <person name="Zhou S."/>
            <person name="Teague B."/>
            <person name="Potamousis K."/>
            <person name="Churas C."/>
            <person name="Place M."/>
            <person name="Herschleb J."/>
            <person name="Runnheim R."/>
            <person name="Forrest D."/>
            <person name="Amos-Landgraf J."/>
            <person name="Schwartz D.C."/>
            <person name="Cheng Z."/>
            <person name="Lindblad-Toh K."/>
            <person name="Eichler E.E."/>
            <person name="Ponting C.P."/>
        </authorList>
    </citation>
    <scope>NUCLEOTIDE SEQUENCE [LARGE SCALE GENOMIC DNA]</scope>
    <source>
        <strain>C57BL/6J</strain>
    </source>
</reference>
<reference key="4">
    <citation type="journal article" date="2006" name="Biochem. J.">
        <title>Novel transcripts of Nox1 are regulated by alternative promoters and expressed under phenotypic modulation of vascular smooth muscle cells.</title>
        <authorList>
            <person name="Arakawa N."/>
            <person name="Katsuyama M."/>
            <person name="Matsuno K."/>
            <person name="Urao N."/>
            <person name="Tabuchi Y."/>
            <person name="Okigaki M."/>
            <person name="Matsubara H."/>
            <person name="Yabe-Nishimura C."/>
        </authorList>
    </citation>
    <scope>NUCLEOTIDE SEQUENCE [MRNA] OF 1-75 (ISOFORM 1)</scope>
    <scope>NUCLEOTIDE SEQUENCE [MRNA] OF 29-75 (ISOFORM 2)</scope>
    <scope>FUNCTION (ISOFORMS 1 AND 2)</scope>
    <scope>ALTERNATIVE SPLICING</scope>
    <scope>TISSUE SPECIFICITY (ISOFORM 2)</scope>
    <scope>INDUCTION (ISOFORM 1)</scope>
    <scope>CATALYTIC ACTIVITY (ISOFORMS 1 AND 2)</scope>
    <scope>MISCELLANEOUS</scope>
    <source>
        <tissue>Colon</tissue>
        <tissue>Vascular smooth muscle</tissue>
    </source>
</reference>
<reference key="5">
    <citation type="submission" date="2002-11" db="EMBL/GenBank/DDBJ databases">
        <title>Nox1 expression in the gastric mucosa of Helicobacter-infected gp91phox-/- mice.</title>
        <authorList>
            <person name="Matsumoto Y."/>
            <person name="Blanchard T.G."/>
        </authorList>
    </citation>
    <scope>NUCLEOTIDE SEQUENCE [MRNA] OF 116-565 (ISOFORMS 1/2)</scope>
    <source>
        <strain>C57BL/6J</strain>
    </source>
</reference>
<reference key="6">
    <citation type="journal article" date="2006" name="Free Radic. Biol. Med.">
        <title>Noxa1 is a central component of the smooth muscle NADPH oxidase in mice.</title>
        <authorList>
            <person name="Ambasta R.K."/>
            <person name="Schreiber J.G."/>
            <person name="Janiszewski M."/>
            <person name="Busse R."/>
            <person name="Brandes R.P."/>
        </authorList>
    </citation>
    <scope>INTERACTION WITH NOXA1</scope>
</reference>
<name>NOX1_MOUSE</name>
<comment type="function">
    <molecule>Isoform 1</molecule>
    <text evidence="6">NADPH oxidase that catalyzes the generation of superoxide from molecular oxygen utilizing NADPH as an electron donor.</text>
</comment>
<comment type="function">
    <molecule>Isoform 2</molecule>
    <text evidence="5 6">NADPH oxidase that catalyzes the generation of superoxide from molecular oxygen utilizing NADPH as an electron donor.</text>
</comment>
<comment type="catalytic activity">
    <molecule>Isoform 1</molecule>
    <reaction evidence="6">
        <text>NADPH + 2 O2 = 2 superoxide + NADP(+) + H(+)</text>
        <dbReference type="Rhea" id="RHEA:63180"/>
        <dbReference type="ChEBI" id="CHEBI:15378"/>
        <dbReference type="ChEBI" id="CHEBI:15379"/>
        <dbReference type="ChEBI" id="CHEBI:18421"/>
        <dbReference type="ChEBI" id="CHEBI:57783"/>
        <dbReference type="ChEBI" id="CHEBI:58349"/>
    </reaction>
</comment>
<comment type="catalytic activity">
    <molecule>Isoform 2</molecule>
    <reaction evidence="5 6">
        <text>NADPH + 2 O2 = 2 superoxide + NADP(+) + H(+)</text>
        <dbReference type="Rhea" id="RHEA:63180"/>
        <dbReference type="ChEBI" id="CHEBI:15378"/>
        <dbReference type="ChEBI" id="CHEBI:15379"/>
        <dbReference type="ChEBI" id="CHEBI:18421"/>
        <dbReference type="ChEBI" id="CHEBI:57783"/>
        <dbReference type="ChEBI" id="CHEBI:58349"/>
    </reaction>
</comment>
<comment type="cofactor">
    <cofactor evidence="11">
        <name>FAD</name>
        <dbReference type="ChEBI" id="CHEBI:57692"/>
    </cofactor>
</comment>
<comment type="activity regulation">
    <molecule>Isoform 2</molecule>
    <text evidence="5">The oxidase activity is potentiated by NOXA1 and NOXO1.</text>
</comment>
<comment type="subunit">
    <text evidence="2 7">NOX1, NOXA1, NOXO1, RAC1 and CYBA forms a functional multimeric complex supporting ROS production. Interacts with NOXO1. Interacts (via FAD-binding FR-type domain) with ARHGEF7 (via PH domain) (By similarity). Interacts with NOXA1 (PubMed:16814099).</text>
</comment>
<comment type="subcellular location">
    <subcellularLocation>
        <location evidence="2">Cell projection</location>
        <location evidence="2">Invadopodium membrane</location>
        <topology evidence="3">Multi-pass membrane protein</topology>
    </subcellularLocation>
    <subcellularLocation>
        <location evidence="2">Cell membrane</location>
        <topology evidence="3">Multi-pass membrane protein</topology>
    </subcellularLocation>
</comment>
<comment type="alternative products">
    <event type="alternative splicing"/>
    <isoform>
        <id>Q8CIZ9-1</id>
        <name>1</name>
        <name>f-type</name>
        <name>c-type</name>
        <sequence type="displayed"/>
    </isoform>
    <isoform>
        <id>Q8CIZ9-2</id>
        <name>2</name>
        <name>a-type</name>
        <sequence type="described" ref="VSP_038574"/>
    </isoform>
    <isoform>
        <id>Q8CIZ9-3</id>
        <name>3</name>
        <sequence type="described" ref="VSP_038574 VSP_038575"/>
    </isoform>
</comment>
<comment type="tissue specificity">
    <molecule>Isoform 2</molecule>
    <text evidence="5 6">Expressed in colon and vascular smooth muscle cells (VSMC).</text>
</comment>
<comment type="induction">
    <molecule>Isoform 1</molecule>
    <text evidence="6">(c-type) induced in VSMC by angiotensin II and injury to the artery.</text>
</comment>
<comment type="PTM">
    <text evidence="1">Phosphorylation at Thr-457 mediated by PKC/PRKBC positively regulates its interaction with NOXA1 and enzyme activity.</text>
</comment>
<comment type="miscellaneous">
    <molecule>Isoform 1</molecule>
    <text evidence="6">Product of f-type and c-type mRNA, which differ only in 5'-UTR.</text>
</comment>
<proteinExistence type="evidence at protein level"/>
<organism>
    <name type="scientific">Mus musculus</name>
    <name type="common">Mouse</name>
    <dbReference type="NCBI Taxonomy" id="10090"/>
    <lineage>
        <taxon>Eukaryota</taxon>
        <taxon>Metazoa</taxon>
        <taxon>Chordata</taxon>
        <taxon>Craniata</taxon>
        <taxon>Vertebrata</taxon>
        <taxon>Euteleostomi</taxon>
        <taxon>Mammalia</taxon>
        <taxon>Eutheria</taxon>
        <taxon>Euarchontoglires</taxon>
        <taxon>Glires</taxon>
        <taxon>Rodentia</taxon>
        <taxon>Myomorpha</taxon>
        <taxon>Muroidea</taxon>
        <taxon>Muridae</taxon>
        <taxon>Murinae</taxon>
        <taxon>Mus</taxon>
        <taxon>Mus</taxon>
    </lineage>
</organism>
<evidence type="ECO:0000250" key="1">
    <source>
        <dbReference type="UniProtKB" id="Q9WV87"/>
    </source>
</evidence>
<evidence type="ECO:0000250" key="2">
    <source>
        <dbReference type="UniProtKB" id="Q9Y5S8"/>
    </source>
</evidence>
<evidence type="ECO:0000255" key="3"/>
<evidence type="ECO:0000255" key="4">
    <source>
        <dbReference type="PROSITE-ProRule" id="PRU00716"/>
    </source>
</evidence>
<evidence type="ECO:0000269" key="5">
    <source>
    </source>
</evidence>
<evidence type="ECO:0000269" key="6">
    <source>
    </source>
</evidence>
<evidence type="ECO:0000269" key="7">
    <source>
    </source>
</evidence>
<evidence type="ECO:0000303" key="8">
    <source>
    </source>
</evidence>
<evidence type="ECO:0000303" key="9">
    <source>
    </source>
</evidence>
<evidence type="ECO:0000303" key="10">
    <source>
    </source>
</evidence>
<evidence type="ECO:0000305" key="11"/>
<gene>
    <name type="primary">Nox1</name>
</gene>
<sequence length="591" mass="68193">MAGELRGSRGPLQRIQIAPREAPNLHLTMGNWLVNHWLSVLFLVSWLGLNIFLFVYAFLNYEKSDKYYYTREILGTALALARASALCLNFNSMMILIPVCRNLLSFLRGTCSFCNRTLRKPLDHNLTFHKLVAYMICIFTVIHIIAHLFNFERYRRSQQAMDGSLASVLSSLSHPEKEDSWLNPIQSPNMTVMYAAFTSIAGLTGVIATVALVLMVTSAMEFIRRNYFELFWYTHHLFIVYIICLGIHGLGGIVRGQTEESLGESHPHNCSHSFHEWDDHKGSCRHPHFAGHPPESWKWILAPIAFYIFERILRFYRSQQKVVITKVVMHPSNVLELQMRKRGFSMEVGQYIFVNCPSISFLEWHPFTLTSAPEEEFFSVHIRAAGDWTRNLIRTFEQQHSPMPRIEVDGPFGTVSEDVFQYEVAVLVGAGIGVTPFASILKSIWYKFQRADNKLKTQKIYFYWICRETGAFAWFNNLLNSLEQEMEELGKMDFLNYRLFLTGWDSNIAGHAALNFDRATDILTGLKQKTSFGRPMWDNEFSRIATAHPKSAVGVFLCGPRTLAKSLRKRCQRYSSLDPRKVQFYFNKETF</sequence>